<proteinExistence type="inferred from homology"/>
<evidence type="ECO:0000255" key="1">
    <source>
        <dbReference type="HAMAP-Rule" id="MF_01569"/>
    </source>
</evidence>
<evidence type="ECO:0000305" key="2"/>
<sequence length="564" mass="62447">MRLSEFHLHTTKEIPADAELVSHRLMLRAGMIRKLASGLYTWSPLGLRVLRKVEAIVRDEMNRAGAVEMLLPTIQPRELWEESERWEKFGNQLLKIKDRKQAEYCYSPTAEEAVTDYVRQELTSYKQLPVNLYQIQTKFRDEIRPRFGVMRAREFVMKDAYSFHLNDADLVREYENMRATYTRIFTRLGLEFRAVQADSGAIGGDASQEFHVIADSGEDVLAFSTGSDYAANIEAAIAATPGPRLTANETLQKVSTPTQKRCEDVAALLDIPLQRVVKSIAVMTDSGFFLALLRGDHTLNDIKLSKLPGLANFRLANEVEIARHLGSEPGFLGPVCPGMPIRIIADCEVAVMADFVVGANEVGFHLVGVNWGRDLPEPEVVADIRNVIEGDRAVDGGKICIARGIEVGHVFQLGRKYAEAMKATVLDEYGKAVTMTMGCYGIGVSRIVAAAIEQNHDVAGIIWPASIAPWQVAVCVINPKKDPVITAAAEVLLAELQSADVDTVLDDRGLRPGVMFADMELIGIPHRIVVSERGLAAGTYEYRARHTAMVENLDKTTLLMRIKA</sequence>
<comment type="function">
    <text evidence="1">Catalyzes the attachment of proline to tRNA(Pro) in a two-step reaction: proline is first activated by ATP to form Pro-AMP and then transferred to the acceptor end of tRNA(Pro). As ProRS can inadvertently accommodate and process non-cognate amino acids such as alanine and cysteine, to avoid such errors it has two additional distinct editing activities against alanine. One activity is designated as 'pretransfer' editing and involves the tRNA(Pro)-independent hydrolysis of activated Ala-AMP. The other activity is designated 'posttransfer' editing and involves deacylation of mischarged Ala-tRNA(Pro). The misacylated Cys-tRNA(Pro) is not edited by ProRS.</text>
</comment>
<comment type="catalytic activity">
    <reaction evidence="1">
        <text>tRNA(Pro) + L-proline + ATP = L-prolyl-tRNA(Pro) + AMP + diphosphate</text>
        <dbReference type="Rhea" id="RHEA:14305"/>
        <dbReference type="Rhea" id="RHEA-COMP:9700"/>
        <dbReference type="Rhea" id="RHEA-COMP:9702"/>
        <dbReference type="ChEBI" id="CHEBI:30616"/>
        <dbReference type="ChEBI" id="CHEBI:33019"/>
        <dbReference type="ChEBI" id="CHEBI:60039"/>
        <dbReference type="ChEBI" id="CHEBI:78442"/>
        <dbReference type="ChEBI" id="CHEBI:78532"/>
        <dbReference type="ChEBI" id="CHEBI:456215"/>
        <dbReference type="EC" id="6.1.1.15"/>
    </reaction>
</comment>
<comment type="subunit">
    <text evidence="1">Homodimer.</text>
</comment>
<comment type="subcellular location">
    <subcellularLocation>
        <location evidence="1">Cytoplasm</location>
    </subcellularLocation>
</comment>
<comment type="domain">
    <text evidence="1">Consists of three domains: the N-terminal catalytic domain, the editing domain and the C-terminal anticodon-binding domain.</text>
</comment>
<comment type="similarity">
    <text evidence="1">Belongs to the class-II aminoacyl-tRNA synthetase family. ProS type 1 subfamily.</text>
</comment>
<comment type="sequence caution" evidence="2">
    <conflict type="erroneous initiation">
        <sequence resource="EMBL-CDS" id="AAF83255"/>
    </conflict>
</comment>
<dbReference type="EC" id="6.1.1.15" evidence="1"/>
<dbReference type="EMBL" id="AE003849">
    <property type="protein sequence ID" value="AAF83255.1"/>
    <property type="status" value="ALT_INIT"/>
    <property type="molecule type" value="Genomic_DNA"/>
</dbReference>
<dbReference type="PIR" id="B82805">
    <property type="entry name" value="B82805"/>
</dbReference>
<dbReference type="RefSeq" id="WP_010892974.1">
    <property type="nucleotide sequence ID" value="NC_002488.3"/>
</dbReference>
<dbReference type="SMR" id="Q9PG57"/>
<dbReference type="STRING" id="160492.XF_0445"/>
<dbReference type="KEGG" id="xfa:XF_0445"/>
<dbReference type="eggNOG" id="COG0442">
    <property type="taxonomic scope" value="Bacteria"/>
</dbReference>
<dbReference type="HOGENOM" id="CLU_016739_0_0_6"/>
<dbReference type="Proteomes" id="UP000000812">
    <property type="component" value="Chromosome"/>
</dbReference>
<dbReference type="GO" id="GO:0005829">
    <property type="term" value="C:cytosol"/>
    <property type="evidence" value="ECO:0007669"/>
    <property type="project" value="TreeGrafter"/>
</dbReference>
<dbReference type="GO" id="GO:0002161">
    <property type="term" value="F:aminoacyl-tRNA deacylase activity"/>
    <property type="evidence" value="ECO:0007669"/>
    <property type="project" value="InterPro"/>
</dbReference>
<dbReference type="GO" id="GO:0005524">
    <property type="term" value="F:ATP binding"/>
    <property type="evidence" value="ECO:0007669"/>
    <property type="project" value="UniProtKB-UniRule"/>
</dbReference>
<dbReference type="GO" id="GO:0004827">
    <property type="term" value="F:proline-tRNA ligase activity"/>
    <property type="evidence" value="ECO:0007669"/>
    <property type="project" value="UniProtKB-UniRule"/>
</dbReference>
<dbReference type="GO" id="GO:0006433">
    <property type="term" value="P:prolyl-tRNA aminoacylation"/>
    <property type="evidence" value="ECO:0007669"/>
    <property type="project" value="UniProtKB-UniRule"/>
</dbReference>
<dbReference type="CDD" id="cd04334">
    <property type="entry name" value="ProRS-INS"/>
    <property type="match status" value="1"/>
</dbReference>
<dbReference type="CDD" id="cd00861">
    <property type="entry name" value="ProRS_anticodon_short"/>
    <property type="match status" value="1"/>
</dbReference>
<dbReference type="CDD" id="cd00779">
    <property type="entry name" value="ProRS_core_prok"/>
    <property type="match status" value="1"/>
</dbReference>
<dbReference type="FunFam" id="3.30.930.10:FF:000012">
    <property type="entry name" value="Proline--tRNA ligase"/>
    <property type="match status" value="1"/>
</dbReference>
<dbReference type="Gene3D" id="3.40.50.800">
    <property type="entry name" value="Anticodon-binding domain"/>
    <property type="match status" value="1"/>
</dbReference>
<dbReference type="Gene3D" id="3.30.930.10">
    <property type="entry name" value="Bira Bifunctional Protein, Domain 2"/>
    <property type="match status" value="2"/>
</dbReference>
<dbReference type="Gene3D" id="3.90.960.10">
    <property type="entry name" value="YbaK/aminoacyl-tRNA synthetase-associated domain"/>
    <property type="match status" value="1"/>
</dbReference>
<dbReference type="HAMAP" id="MF_01569">
    <property type="entry name" value="Pro_tRNA_synth_type1"/>
    <property type="match status" value="1"/>
</dbReference>
<dbReference type="InterPro" id="IPR002314">
    <property type="entry name" value="aa-tRNA-synt_IIb"/>
</dbReference>
<dbReference type="InterPro" id="IPR006195">
    <property type="entry name" value="aa-tRNA-synth_II"/>
</dbReference>
<dbReference type="InterPro" id="IPR045864">
    <property type="entry name" value="aa-tRNA-synth_II/BPL/LPL"/>
</dbReference>
<dbReference type="InterPro" id="IPR004154">
    <property type="entry name" value="Anticodon-bd"/>
</dbReference>
<dbReference type="InterPro" id="IPR036621">
    <property type="entry name" value="Anticodon-bd_dom_sf"/>
</dbReference>
<dbReference type="InterPro" id="IPR002316">
    <property type="entry name" value="Pro-tRNA-ligase_IIa"/>
</dbReference>
<dbReference type="InterPro" id="IPR004500">
    <property type="entry name" value="Pro-tRNA-synth_IIa_bac-type"/>
</dbReference>
<dbReference type="InterPro" id="IPR023717">
    <property type="entry name" value="Pro-tRNA-Synthase_IIa_type1"/>
</dbReference>
<dbReference type="InterPro" id="IPR050062">
    <property type="entry name" value="Pro-tRNA_synthetase"/>
</dbReference>
<dbReference type="InterPro" id="IPR044140">
    <property type="entry name" value="ProRS_anticodon_short"/>
</dbReference>
<dbReference type="InterPro" id="IPR033730">
    <property type="entry name" value="ProRS_core_prok"/>
</dbReference>
<dbReference type="InterPro" id="IPR036754">
    <property type="entry name" value="YbaK/aa-tRNA-synt-asso_dom_sf"/>
</dbReference>
<dbReference type="InterPro" id="IPR007214">
    <property type="entry name" value="YbaK/aa-tRNA-synth-assoc-dom"/>
</dbReference>
<dbReference type="NCBIfam" id="NF006625">
    <property type="entry name" value="PRK09194.1"/>
    <property type="match status" value="1"/>
</dbReference>
<dbReference type="NCBIfam" id="TIGR00409">
    <property type="entry name" value="proS_fam_II"/>
    <property type="match status" value="1"/>
</dbReference>
<dbReference type="PANTHER" id="PTHR42753">
    <property type="entry name" value="MITOCHONDRIAL RIBOSOME PROTEIN L39/PROLYL-TRNA LIGASE FAMILY MEMBER"/>
    <property type="match status" value="1"/>
</dbReference>
<dbReference type="PANTHER" id="PTHR42753:SF2">
    <property type="entry name" value="PROLINE--TRNA LIGASE"/>
    <property type="match status" value="1"/>
</dbReference>
<dbReference type="Pfam" id="PF03129">
    <property type="entry name" value="HGTP_anticodon"/>
    <property type="match status" value="1"/>
</dbReference>
<dbReference type="Pfam" id="PF00587">
    <property type="entry name" value="tRNA-synt_2b"/>
    <property type="match status" value="1"/>
</dbReference>
<dbReference type="Pfam" id="PF04073">
    <property type="entry name" value="tRNA_edit"/>
    <property type="match status" value="1"/>
</dbReference>
<dbReference type="PRINTS" id="PR01046">
    <property type="entry name" value="TRNASYNTHPRO"/>
</dbReference>
<dbReference type="SUPFAM" id="SSF52954">
    <property type="entry name" value="Class II aaRS ABD-related"/>
    <property type="match status" value="1"/>
</dbReference>
<dbReference type="SUPFAM" id="SSF55681">
    <property type="entry name" value="Class II aaRS and biotin synthetases"/>
    <property type="match status" value="1"/>
</dbReference>
<dbReference type="SUPFAM" id="SSF55826">
    <property type="entry name" value="YbaK/ProRS associated domain"/>
    <property type="match status" value="1"/>
</dbReference>
<dbReference type="PROSITE" id="PS50862">
    <property type="entry name" value="AA_TRNA_LIGASE_II"/>
    <property type="match status" value="1"/>
</dbReference>
<feature type="chain" id="PRO_0000248821" description="Proline--tRNA ligase">
    <location>
        <begin position="1"/>
        <end position="564"/>
    </location>
</feature>
<name>SYP_XYLFA</name>
<protein>
    <recommendedName>
        <fullName evidence="1">Proline--tRNA ligase</fullName>
        <ecNumber evidence="1">6.1.1.15</ecNumber>
    </recommendedName>
    <alternativeName>
        <fullName evidence="1">Prolyl-tRNA synthetase</fullName>
        <shortName evidence="1">ProRS</shortName>
    </alternativeName>
</protein>
<accession>Q9PG57</accession>
<gene>
    <name evidence="1" type="primary">proS</name>
    <name type="ordered locus">XF_0445</name>
</gene>
<organism>
    <name type="scientific">Xylella fastidiosa (strain 9a5c)</name>
    <dbReference type="NCBI Taxonomy" id="160492"/>
    <lineage>
        <taxon>Bacteria</taxon>
        <taxon>Pseudomonadati</taxon>
        <taxon>Pseudomonadota</taxon>
        <taxon>Gammaproteobacteria</taxon>
        <taxon>Lysobacterales</taxon>
        <taxon>Lysobacteraceae</taxon>
        <taxon>Xylella</taxon>
    </lineage>
</organism>
<keyword id="KW-0030">Aminoacyl-tRNA synthetase</keyword>
<keyword id="KW-0067">ATP-binding</keyword>
<keyword id="KW-0963">Cytoplasm</keyword>
<keyword id="KW-0436">Ligase</keyword>
<keyword id="KW-0547">Nucleotide-binding</keyword>
<keyword id="KW-0648">Protein biosynthesis</keyword>
<reference key="1">
    <citation type="journal article" date="2000" name="Nature">
        <title>The genome sequence of the plant pathogen Xylella fastidiosa.</title>
        <authorList>
            <person name="Simpson A.J.G."/>
            <person name="Reinach F.C."/>
            <person name="Arruda P."/>
            <person name="Abreu F.A."/>
            <person name="Acencio M."/>
            <person name="Alvarenga R."/>
            <person name="Alves L.M.C."/>
            <person name="Araya J.E."/>
            <person name="Baia G.S."/>
            <person name="Baptista C.S."/>
            <person name="Barros M.H."/>
            <person name="Bonaccorsi E.D."/>
            <person name="Bordin S."/>
            <person name="Bove J.M."/>
            <person name="Briones M.R.S."/>
            <person name="Bueno M.R.P."/>
            <person name="Camargo A.A."/>
            <person name="Camargo L.E.A."/>
            <person name="Carraro D.M."/>
            <person name="Carrer H."/>
            <person name="Colauto N.B."/>
            <person name="Colombo C."/>
            <person name="Costa F.F."/>
            <person name="Costa M.C.R."/>
            <person name="Costa-Neto C.M."/>
            <person name="Coutinho L.L."/>
            <person name="Cristofani M."/>
            <person name="Dias-Neto E."/>
            <person name="Docena C."/>
            <person name="El-Dorry H."/>
            <person name="Facincani A.P."/>
            <person name="Ferreira A.J.S."/>
            <person name="Ferreira V.C.A."/>
            <person name="Ferro J.A."/>
            <person name="Fraga J.S."/>
            <person name="Franca S.C."/>
            <person name="Franco M.C."/>
            <person name="Frohme M."/>
            <person name="Furlan L.R."/>
            <person name="Garnier M."/>
            <person name="Goldman G.H."/>
            <person name="Goldman M.H.S."/>
            <person name="Gomes S.L."/>
            <person name="Gruber A."/>
            <person name="Ho P.L."/>
            <person name="Hoheisel J.D."/>
            <person name="Junqueira M.L."/>
            <person name="Kemper E.L."/>
            <person name="Kitajima J.P."/>
            <person name="Krieger J.E."/>
            <person name="Kuramae E.E."/>
            <person name="Laigret F."/>
            <person name="Lambais M.R."/>
            <person name="Leite L.C.C."/>
            <person name="Lemos E.G.M."/>
            <person name="Lemos M.V.F."/>
            <person name="Lopes S.A."/>
            <person name="Lopes C.R."/>
            <person name="Machado J.A."/>
            <person name="Machado M.A."/>
            <person name="Madeira A.M.B.N."/>
            <person name="Madeira H.M.F."/>
            <person name="Marino C.L."/>
            <person name="Marques M.V."/>
            <person name="Martins E.A.L."/>
            <person name="Martins E.M.F."/>
            <person name="Matsukuma A.Y."/>
            <person name="Menck C.F.M."/>
            <person name="Miracca E.C."/>
            <person name="Miyaki C.Y."/>
            <person name="Monteiro-Vitorello C.B."/>
            <person name="Moon D.H."/>
            <person name="Nagai M.A."/>
            <person name="Nascimento A.L.T.O."/>
            <person name="Netto L.E.S."/>
            <person name="Nhani A. Jr."/>
            <person name="Nobrega F.G."/>
            <person name="Nunes L.R."/>
            <person name="Oliveira M.A."/>
            <person name="de Oliveira M.C."/>
            <person name="de Oliveira R.C."/>
            <person name="Palmieri D.A."/>
            <person name="Paris A."/>
            <person name="Peixoto B.R."/>
            <person name="Pereira G.A.G."/>
            <person name="Pereira H.A. Jr."/>
            <person name="Pesquero J.B."/>
            <person name="Quaggio R.B."/>
            <person name="Roberto P.G."/>
            <person name="Rodrigues V."/>
            <person name="de Rosa A.J.M."/>
            <person name="de Rosa V.E. Jr."/>
            <person name="de Sa R.G."/>
            <person name="Santelli R.V."/>
            <person name="Sawasaki H.E."/>
            <person name="da Silva A.C.R."/>
            <person name="da Silva A.M."/>
            <person name="da Silva F.R."/>
            <person name="Silva W.A. Jr."/>
            <person name="da Silveira J.F."/>
            <person name="Silvestri M.L.Z."/>
            <person name="Siqueira W.J."/>
            <person name="de Souza A.A."/>
            <person name="de Souza A.P."/>
            <person name="Terenzi M.F."/>
            <person name="Truffi D."/>
            <person name="Tsai S.M."/>
            <person name="Tsuhako M.H."/>
            <person name="Vallada H."/>
            <person name="Van Sluys M.A."/>
            <person name="Verjovski-Almeida S."/>
            <person name="Vettore A.L."/>
            <person name="Zago M.A."/>
            <person name="Zatz M."/>
            <person name="Meidanis J."/>
            <person name="Setubal J.C."/>
        </authorList>
    </citation>
    <scope>NUCLEOTIDE SEQUENCE [LARGE SCALE GENOMIC DNA]</scope>
    <source>
        <strain>9a5c</strain>
    </source>
</reference>